<sequence length="504" mass="55581">MTKLLEMKNITKKFGDVVALNNISISLETGEILSLCGENGSGKSTLMKVLCGIYPSGDYEGEIYFSGEKLTAKNIKDTEEKGISIIHQELTLVKNMSVLENMFLGNEITQAGITNDNKMYLRCKTLLEQVQLDIDPNTKVSALGLGQQQLVEIAKALNKQVRLLILDEPTASLTEKETDILLNLIKGLQAHNIACIYISHKLNEVKAISDKICVIRDGEHIGTQLAQGISEDDIITMMVGREITSLYPHEPHDIGKEILRVENLTAWHPTNTHIKRVDNANFILRKGEILGVAGLVGSGRTEMAQCIFGSYVGKYQGNIFLNNQKVKINKCAEAIANHIVMVPEDRKKHGIIPIMSVGKNITLSSLSQFCFGKKVINEPLEETIINQSIAKLKVKTSSPELAIGRLSGGNQQKAILAKCLLLHPNILILDEPTRGIDVGAKYEIYKLINQLAQEGMSIIVISSELPEVLGISDRVLVMHQGKVKADLINHHLTQEQVMEAALKE</sequence>
<protein>
    <recommendedName>
        <fullName evidence="1">Xylose import ATP-binding protein XylG</fullName>
        <ecNumber evidence="1">7.5.2.10</ecNumber>
    </recommendedName>
</protein>
<keyword id="KW-0067">ATP-binding</keyword>
<keyword id="KW-0997">Cell inner membrane</keyword>
<keyword id="KW-1003">Cell membrane</keyword>
<keyword id="KW-0472">Membrane</keyword>
<keyword id="KW-0547">Nucleotide-binding</keyword>
<keyword id="KW-0677">Repeat</keyword>
<keyword id="KW-0762">Sugar transport</keyword>
<keyword id="KW-1278">Translocase</keyword>
<keyword id="KW-0813">Transport</keyword>
<dbReference type="EC" id="7.5.2.10" evidence="1"/>
<dbReference type="EMBL" id="CP000436">
    <property type="protein sequence ID" value="ABI24862.1"/>
    <property type="molecule type" value="Genomic_DNA"/>
</dbReference>
<dbReference type="SMR" id="Q0I348"/>
<dbReference type="KEGG" id="hso:HS_0585"/>
<dbReference type="eggNOG" id="COG1129">
    <property type="taxonomic scope" value="Bacteria"/>
</dbReference>
<dbReference type="HOGENOM" id="CLU_000604_92_3_6"/>
<dbReference type="GO" id="GO:0005886">
    <property type="term" value="C:plasma membrane"/>
    <property type="evidence" value="ECO:0007669"/>
    <property type="project" value="UniProtKB-SubCell"/>
</dbReference>
<dbReference type="GO" id="GO:0015614">
    <property type="term" value="F:ABC-type D-xylose transporter activity"/>
    <property type="evidence" value="ECO:0007669"/>
    <property type="project" value="UniProtKB-EC"/>
</dbReference>
<dbReference type="GO" id="GO:0005524">
    <property type="term" value="F:ATP binding"/>
    <property type="evidence" value="ECO:0007669"/>
    <property type="project" value="UniProtKB-KW"/>
</dbReference>
<dbReference type="GO" id="GO:0016887">
    <property type="term" value="F:ATP hydrolysis activity"/>
    <property type="evidence" value="ECO:0007669"/>
    <property type="project" value="InterPro"/>
</dbReference>
<dbReference type="CDD" id="cd03216">
    <property type="entry name" value="ABC_Carb_Monos_I"/>
    <property type="match status" value="1"/>
</dbReference>
<dbReference type="CDD" id="cd03215">
    <property type="entry name" value="ABC_Carb_Monos_II"/>
    <property type="match status" value="1"/>
</dbReference>
<dbReference type="FunFam" id="3.40.50.300:FF:000126">
    <property type="entry name" value="Galactose/methyl galactoside import ATP-binding protein MglA"/>
    <property type="match status" value="1"/>
</dbReference>
<dbReference type="FunFam" id="3.40.50.300:FF:000127">
    <property type="entry name" value="Ribose import ATP-binding protein RbsA"/>
    <property type="match status" value="1"/>
</dbReference>
<dbReference type="Gene3D" id="3.40.50.300">
    <property type="entry name" value="P-loop containing nucleotide triphosphate hydrolases"/>
    <property type="match status" value="2"/>
</dbReference>
<dbReference type="InterPro" id="IPR003593">
    <property type="entry name" value="AAA+_ATPase"/>
</dbReference>
<dbReference type="InterPro" id="IPR050107">
    <property type="entry name" value="ABC_carbohydrate_import_ATPase"/>
</dbReference>
<dbReference type="InterPro" id="IPR003439">
    <property type="entry name" value="ABC_transporter-like_ATP-bd"/>
</dbReference>
<dbReference type="InterPro" id="IPR017871">
    <property type="entry name" value="ABC_transporter-like_CS"/>
</dbReference>
<dbReference type="InterPro" id="IPR013455">
    <property type="entry name" value="ABC_transptr_XylG"/>
</dbReference>
<dbReference type="InterPro" id="IPR027417">
    <property type="entry name" value="P-loop_NTPase"/>
</dbReference>
<dbReference type="NCBIfam" id="NF010069">
    <property type="entry name" value="PRK13549.1"/>
    <property type="match status" value="1"/>
</dbReference>
<dbReference type="NCBIfam" id="TIGR02633">
    <property type="entry name" value="xylG"/>
    <property type="match status" value="1"/>
</dbReference>
<dbReference type="PANTHER" id="PTHR43790">
    <property type="entry name" value="CARBOHYDRATE TRANSPORT ATP-BINDING PROTEIN MG119-RELATED"/>
    <property type="match status" value="1"/>
</dbReference>
<dbReference type="PANTHER" id="PTHR43790:SF1">
    <property type="entry name" value="XYLOSE IMPORT ATP-BINDING PROTEIN XYLG"/>
    <property type="match status" value="1"/>
</dbReference>
<dbReference type="Pfam" id="PF00005">
    <property type="entry name" value="ABC_tran"/>
    <property type="match status" value="2"/>
</dbReference>
<dbReference type="SMART" id="SM00382">
    <property type="entry name" value="AAA"/>
    <property type="match status" value="2"/>
</dbReference>
<dbReference type="SUPFAM" id="SSF52540">
    <property type="entry name" value="P-loop containing nucleoside triphosphate hydrolases"/>
    <property type="match status" value="2"/>
</dbReference>
<dbReference type="PROSITE" id="PS00211">
    <property type="entry name" value="ABC_TRANSPORTER_1"/>
    <property type="match status" value="1"/>
</dbReference>
<dbReference type="PROSITE" id="PS50893">
    <property type="entry name" value="ABC_TRANSPORTER_2"/>
    <property type="match status" value="2"/>
</dbReference>
<dbReference type="PROSITE" id="PS51280">
    <property type="entry name" value="XYLG"/>
    <property type="match status" value="1"/>
</dbReference>
<feature type="chain" id="PRO_0000271506" description="Xylose import ATP-binding protein XylG">
    <location>
        <begin position="1"/>
        <end position="504"/>
    </location>
</feature>
<feature type="domain" description="ABC transporter 1" evidence="1">
    <location>
        <begin position="5"/>
        <end position="242"/>
    </location>
</feature>
<feature type="domain" description="ABC transporter 2" evidence="1">
    <location>
        <begin position="259"/>
        <end position="500"/>
    </location>
</feature>
<feature type="binding site" evidence="1">
    <location>
        <begin position="37"/>
        <end position="44"/>
    </location>
    <ligand>
        <name>ATP</name>
        <dbReference type="ChEBI" id="CHEBI:30616"/>
    </ligand>
</feature>
<name>XYLG_HISS1</name>
<comment type="function">
    <text evidence="1">Part of the ABC transporter complex XylFGH involved in xylose import. Responsible for energy coupling to the transport system.</text>
</comment>
<comment type="catalytic activity">
    <reaction evidence="1">
        <text>D-xylose(out) + ATP + H2O = D-xylose(in) + ADP + phosphate + H(+)</text>
        <dbReference type="Rhea" id="RHEA:29899"/>
        <dbReference type="ChEBI" id="CHEBI:15377"/>
        <dbReference type="ChEBI" id="CHEBI:15378"/>
        <dbReference type="ChEBI" id="CHEBI:30616"/>
        <dbReference type="ChEBI" id="CHEBI:43474"/>
        <dbReference type="ChEBI" id="CHEBI:53455"/>
        <dbReference type="ChEBI" id="CHEBI:456216"/>
        <dbReference type="EC" id="7.5.2.10"/>
    </reaction>
</comment>
<comment type="subunit">
    <text evidence="1">The complex is composed of two ATP-binding proteins (XylG), two transmembrane proteins (XylH) and a solute-binding protein (XylF).</text>
</comment>
<comment type="subcellular location">
    <subcellularLocation>
        <location evidence="1">Cell inner membrane</location>
        <topology evidence="1">Peripheral membrane protein</topology>
    </subcellularLocation>
</comment>
<comment type="similarity">
    <text evidence="1">Belongs to the ABC transporter superfamily. Xylose importer (TC 3.A.1.2.4) family.</text>
</comment>
<organism>
    <name type="scientific">Histophilus somni (strain 129Pt)</name>
    <name type="common">Haemophilus somnus</name>
    <dbReference type="NCBI Taxonomy" id="205914"/>
    <lineage>
        <taxon>Bacteria</taxon>
        <taxon>Pseudomonadati</taxon>
        <taxon>Pseudomonadota</taxon>
        <taxon>Gammaproteobacteria</taxon>
        <taxon>Pasteurellales</taxon>
        <taxon>Pasteurellaceae</taxon>
        <taxon>Histophilus</taxon>
    </lineage>
</organism>
<evidence type="ECO:0000255" key="1">
    <source>
        <dbReference type="HAMAP-Rule" id="MF_01722"/>
    </source>
</evidence>
<proteinExistence type="inferred from homology"/>
<gene>
    <name evidence="1" type="primary">xylG</name>
    <name type="ordered locus">HS_0585</name>
</gene>
<accession>Q0I348</accession>
<reference key="1">
    <citation type="journal article" date="2007" name="J. Bacteriol.">
        <title>Complete genome sequence of Haemophilus somnus (Histophilus somni) strain 129Pt and comparison to Haemophilus ducreyi 35000HP and Haemophilus influenzae Rd.</title>
        <authorList>
            <person name="Challacombe J.F."/>
            <person name="Duncan A.J."/>
            <person name="Brettin T.S."/>
            <person name="Bruce D."/>
            <person name="Chertkov O."/>
            <person name="Detter J.C."/>
            <person name="Han C.S."/>
            <person name="Misra M."/>
            <person name="Richardson P."/>
            <person name="Tapia R."/>
            <person name="Thayer N."/>
            <person name="Xie G."/>
            <person name="Inzana T.J."/>
        </authorList>
    </citation>
    <scope>NUCLEOTIDE SEQUENCE [LARGE SCALE GENOMIC DNA]</scope>
    <source>
        <strain>129Pt</strain>
    </source>
</reference>